<evidence type="ECO:0000255" key="1"/>
<evidence type="ECO:0000255" key="2">
    <source>
        <dbReference type="PROSITE-ProRule" id="PRU00774"/>
    </source>
</evidence>
<evidence type="ECO:0000256" key="3">
    <source>
        <dbReference type="SAM" id="MobiDB-lite"/>
    </source>
</evidence>
<evidence type="ECO:0000269" key="4">
    <source>
    </source>
</evidence>
<evidence type="ECO:0000269" key="5">
    <source>
    </source>
</evidence>
<evidence type="ECO:0000269" key="6">
    <source>
    </source>
</evidence>
<evidence type="ECO:0000269" key="7">
    <source>
    </source>
</evidence>
<evidence type="ECO:0000305" key="8"/>
<comment type="function">
    <text evidence="5 7">Might be involved in the organization and polarity of the actin cytoskeleton. Involved in polar pollen cell growth process by maintaining tip-focused cell membrane expansion for the polar extension of pollen tubes.</text>
</comment>
<comment type="subunit">
    <text evidence="4">Interacts with FIP2.</text>
</comment>
<comment type="subcellular location">
    <subcellularLocation>
        <location evidence="8">Membrane</location>
        <topology evidence="8">Single-pass membrane protein</topology>
    </subcellularLocation>
</comment>
<comment type="induction">
    <text evidence="6">Up-regulated during gall formation induced by root-knot nematodes.</text>
</comment>
<comment type="similarity">
    <text evidence="8">Belongs to the formin-like family. Class-I subfamily.</text>
</comment>
<gene>
    <name type="primary">FH1</name>
    <name type="synonym">AFH1</name>
    <name type="ordered locus">At3g25500</name>
    <name type="ORF">MWL2.16</name>
</gene>
<keyword id="KW-0002">3D-structure</keyword>
<keyword id="KW-0472">Membrane</keyword>
<keyword id="KW-1185">Reference proteome</keyword>
<keyword id="KW-0732">Signal</keyword>
<keyword id="KW-0812">Transmembrane</keyword>
<keyword id="KW-1133">Transmembrane helix</keyword>
<protein>
    <recommendedName>
        <fullName>Formin-like protein 1</fullName>
        <shortName>AtFH1</shortName>
        <shortName>AtFORMIN-8</shortName>
    </recommendedName>
</protein>
<accession>Q9SE97</accession>
<accession>Q0WVK4</accession>
<name>FH1_ARATH</name>
<feature type="signal peptide" evidence="1">
    <location>
        <begin position="1"/>
        <end position="21"/>
    </location>
</feature>
<feature type="chain" id="PRO_0000308526" description="Formin-like protein 1">
    <location>
        <begin position="22"/>
        <end position="1051"/>
    </location>
</feature>
<feature type="transmembrane region" description="Helical" evidence="1">
    <location>
        <begin position="108"/>
        <end position="128"/>
    </location>
</feature>
<feature type="domain" description="FH2" evidence="2">
    <location>
        <begin position="588"/>
        <end position="1010"/>
    </location>
</feature>
<feature type="region of interest" description="Disordered" evidence="3">
    <location>
        <begin position="35"/>
        <end position="71"/>
    </location>
</feature>
<feature type="region of interest" description="Disordered" evidence="3">
    <location>
        <begin position="140"/>
        <end position="192"/>
    </location>
</feature>
<feature type="region of interest" description="Disordered" evidence="3">
    <location>
        <begin position="206"/>
        <end position="324"/>
    </location>
</feature>
<feature type="region of interest" description="Disordered" evidence="3">
    <location>
        <begin position="363"/>
        <end position="412"/>
    </location>
</feature>
<feature type="region of interest" description="Disordered" evidence="3">
    <location>
        <begin position="457"/>
        <end position="542"/>
    </location>
</feature>
<feature type="region of interest" description="Disordered" evidence="3">
    <location>
        <begin position="1009"/>
        <end position="1051"/>
    </location>
</feature>
<feature type="compositionally biased region" description="Pro residues" evidence="3">
    <location>
        <begin position="35"/>
        <end position="48"/>
    </location>
</feature>
<feature type="compositionally biased region" description="Low complexity" evidence="3">
    <location>
        <begin position="49"/>
        <end position="71"/>
    </location>
</feature>
<feature type="compositionally biased region" description="Low complexity" evidence="3">
    <location>
        <begin position="180"/>
        <end position="190"/>
    </location>
</feature>
<feature type="compositionally biased region" description="Polar residues" evidence="3">
    <location>
        <begin position="207"/>
        <end position="216"/>
    </location>
</feature>
<feature type="compositionally biased region" description="Low complexity" evidence="3">
    <location>
        <begin position="278"/>
        <end position="301"/>
    </location>
</feature>
<feature type="compositionally biased region" description="Low complexity" evidence="3">
    <location>
        <begin position="401"/>
        <end position="410"/>
    </location>
</feature>
<feature type="compositionally biased region" description="Low complexity" evidence="3">
    <location>
        <begin position="459"/>
        <end position="473"/>
    </location>
</feature>
<feature type="compositionally biased region" description="Low complexity" evidence="3">
    <location>
        <begin position="484"/>
        <end position="498"/>
    </location>
</feature>
<feature type="compositionally biased region" description="Polar residues" evidence="3">
    <location>
        <begin position="512"/>
        <end position="522"/>
    </location>
</feature>
<feature type="compositionally biased region" description="Pro residues" evidence="3">
    <location>
        <begin position="525"/>
        <end position="536"/>
    </location>
</feature>
<feature type="compositionally biased region" description="Pro residues" evidence="3">
    <location>
        <begin position="1009"/>
        <end position="1018"/>
    </location>
</feature>
<feature type="compositionally biased region" description="Low complexity" evidence="3">
    <location>
        <begin position="1027"/>
        <end position="1038"/>
    </location>
</feature>
<feature type="sequence conflict" description="In Ref. 5; BAE98844." evidence="8" ref="5">
    <original>L</original>
    <variation>R</variation>
    <location>
        <position position="5"/>
    </location>
</feature>
<feature type="sequence conflict" description="In Ref. 5; BAE98844." evidence="8" ref="5">
    <original>P</original>
    <variation>T</variation>
    <location>
        <position position="44"/>
    </location>
</feature>
<feature type="sequence conflict" description="In Ref. 5; BAE98844." evidence="8" ref="5">
    <original>V</original>
    <variation>D</variation>
    <location>
        <position position="122"/>
    </location>
</feature>
<dbReference type="EMBL" id="AF174427">
    <property type="protein sequence ID" value="AAF14548.1"/>
    <property type="molecule type" value="mRNA"/>
</dbReference>
<dbReference type="EMBL" id="AB025639">
    <property type="protein sequence ID" value="BAB01320.1"/>
    <property type="molecule type" value="Genomic_DNA"/>
</dbReference>
<dbReference type="EMBL" id="CP002686">
    <property type="protein sequence ID" value="AEE77017.1"/>
    <property type="molecule type" value="Genomic_DNA"/>
</dbReference>
<dbReference type="EMBL" id="AY080793">
    <property type="protein sequence ID" value="AAL87275.1"/>
    <property type="molecule type" value="mRNA"/>
</dbReference>
<dbReference type="EMBL" id="AY142579">
    <property type="protein sequence ID" value="AAN13148.1"/>
    <property type="molecule type" value="mRNA"/>
</dbReference>
<dbReference type="EMBL" id="AK226743">
    <property type="protein sequence ID" value="BAE98844.1"/>
    <property type="molecule type" value="mRNA"/>
</dbReference>
<dbReference type="RefSeq" id="NP_189177.1">
    <property type="nucleotide sequence ID" value="NM_113446.5"/>
</dbReference>
<dbReference type="PDB" id="6IQJ">
    <property type="method" value="X-ray"/>
    <property type="resolution" value="1.92 A"/>
    <property type="chains" value="C/D=524-536"/>
</dbReference>
<dbReference type="PDBsum" id="6IQJ"/>
<dbReference type="SMR" id="Q9SE97"/>
<dbReference type="BioGRID" id="7467">
    <property type="interactions" value="4"/>
</dbReference>
<dbReference type="FunCoup" id="Q9SE97">
    <property type="interactions" value="1206"/>
</dbReference>
<dbReference type="STRING" id="3702.Q9SE97"/>
<dbReference type="iPTMnet" id="Q9SE97"/>
<dbReference type="PaxDb" id="3702-AT3G25500.1"/>
<dbReference type="ProteomicsDB" id="230095"/>
<dbReference type="EnsemblPlants" id="AT3G25500.1">
    <property type="protein sequence ID" value="AT3G25500.1"/>
    <property type="gene ID" value="AT3G25500"/>
</dbReference>
<dbReference type="GeneID" id="822136"/>
<dbReference type="Gramene" id="AT3G25500.1">
    <property type="protein sequence ID" value="AT3G25500.1"/>
    <property type="gene ID" value="AT3G25500"/>
</dbReference>
<dbReference type="KEGG" id="ath:AT3G25500"/>
<dbReference type="Araport" id="AT3G25500"/>
<dbReference type="TAIR" id="AT3G25500">
    <property type="gene designation" value="AFH1"/>
</dbReference>
<dbReference type="eggNOG" id="KOG1922">
    <property type="taxonomic scope" value="Eukaryota"/>
</dbReference>
<dbReference type="HOGENOM" id="CLU_007699_0_0_1"/>
<dbReference type="InParanoid" id="Q9SE97"/>
<dbReference type="OMA" id="QTTPRCV"/>
<dbReference type="OrthoDB" id="1668162at2759"/>
<dbReference type="PRO" id="PR:Q9SE97"/>
<dbReference type="Proteomes" id="UP000006548">
    <property type="component" value="Chromosome 3"/>
</dbReference>
<dbReference type="ExpressionAtlas" id="Q9SE97">
    <property type="expression patterns" value="baseline and differential"/>
</dbReference>
<dbReference type="GO" id="GO:0016020">
    <property type="term" value="C:membrane"/>
    <property type="evidence" value="ECO:0000314"/>
    <property type="project" value="TAIR"/>
</dbReference>
<dbReference type="GO" id="GO:0005886">
    <property type="term" value="C:plasma membrane"/>
    <property type="evidence" value="ECO:0000314"/>
    <property type="project" value="TAIR"/>
</dbReference>
<dbReference type="GO" id="GO:0003779">
    <property type="term" value="F:actin binding"/>
    <property type="evidence" value="ECO:0000250"/>
    <property type="project" value="TAIR"/>
</dbReference>
<dbReference type="GO" id="GO:0051015">
    <property type="term" value="F:actin filament binding"/>
    <property type="evidence" value="ECO:0000314"/>
    <property type="project" value="TAIR"/>
</dbReference>
<dbReference type="GO" id="GO:0030036">
    <property type="term" value="P:actin cytoskeleton organization"/>
    <property type="evidence" value="ECO:0000314"/>
    <property type="project" value="TAIR"/>
</dbReference>
<dbReference type="GO" id="GO:0045010">
    <property type="term" value="P:actin nucleation"/>
    <property type="evidence" value="ECO:0000314"/>
    <property type="project" value="TAIR"/>
</dbReference>
<dbReference type="GO" id="GO:0051016">
    <property type="term" value="P:barbed-end actin filament capping"/>
    <property type="evidence" value="ECO:0000314"/>
    <property type="project" value="TAIR"/>
</dbReference>
<dbReference type="Gene3D" id="1.20.58.2220">
    <property type="entry name" value="Formin, FH2 domain"/>
    <property type="match status" value="1"/>
</dbReference>
<dbReference type="InterPro" id="IPR015425">
    <property type="entry name" value="FH2_Formin"/>
</dbReference>
<dbReference type="InterPro" id="IPR042201">
    <property type="entry name" value="FH2_Formin_sf"/>
</dbReference>
<dbReference type="InterPro" id="IPR027643">
    <property type="entry name" value="Formin-like_plant"/>
</dbReference>
<dbReference type="PANTHER" id="PTHR23213:SF276">
    <property type="entry name" value="FORMIN-LIKE PROTEIN 1"/>
    <property type="match status" value="1"/>
</dbReference>
<dbReference type="PANTHER" id="PTHR23213">
    <property type="entry name" value="FORMIN-RELATED"/>
    <property type="match status" value="1"/>
</dbReference>
<dbReference type="Pfam" id="PF02181">
    <property type="entry name" value="FH2"/>
    <property type="match status" value="1"/>
</dbReference>
<dbReference type="SMART" id="SM00498">
    <property type="entry name" value="FH2"/>
    <property type="match status" value="1"/>
</dbReference>
<dbReference type="SUPFAM" id="SSF101447">
    <property type="entry name" value="Formin homology 2 domain (FH2 domain)"/>
    <property type="match status" value="1"/>
</dbReference>
<dbReference type="PROSITE" id="PS51444">
    <property type="entry name" value="FH2"/>
    <property type="match status" value="1"/>
</dbReference>
<sequence>MLFFLFFFYLLLSSSSDLVFADRRVLHEPFFPIDSPPPSPPSPPPLPKLPFSSTTPPSSSDPNASPFFPLYPSSPPPPSPASFASFPANISSLIVPHATKSPPNSKKLLIVAISAVSSAALVALLIALLYWRRSKRNQDLNFSDDSKTYTTDSSRRVYPPPPATAPPTRRNAEARSKQRTTTSSTNNNSSEFLYLGTMVNQRGIDEQSLSNNGSSSRKLESPDLQPLPPLMKRSFRLNPDVGSIGEEDEEDEFYSPRGSQSGREPLNRVGLPGQNPRSVNNDTISCSSSSSGSPGRSTFISISPSMSPKRSEPKPPVISTPEPAELTDYRFVRSPSLSLASLSSGLKNSDEVGLNQIFRSPTVTSLTTSPENNKKENSPLSSTSTSPERRPNDTPEAYLRSPSHSSASTSPYRCFQKSPEVLPAFMSNLRQGLQSQLLSSPSNSHGGQGFLKQLDALRSRSPSSSSSSVCSSPEKASHKSPVTSPKLSSRNSQSLSSSPDRDFSHSLDVSPRISNISPQILQSRVPPPPPPPPPLPLWGRRSQVTTKADTISRPPSLTPPSHPFVIPSENLPVTSSPMETPETVCASEAAEETPKPKLKALHWDKVRASSDREMVWDHLRSSSFKLDEEMIETLFVAKSLNNKPNQSQTTPRCVLPSPNQENRVLDPKKAQNIAILLRALNVTIEEVCEALLEGNADTLGTELLESLLKMAPTKEEERKLKAYNDDSPVKLGHAEKFLKAMLDIPFAFKRVDAMLYVANFESEVEYLKKSFETLEAACEELRNSRMFLKLLEAVLKTGNRMNVGTNRGDAHAFKLDTLLKLVDVKGADGKTTLLHFVVQEIIRAEGTRLSGNNTQTDDIKCRKLGLQVVSSLCSELSNVKKAAAMDSEVLSSYVSKLSQGIAKINEAIQVQSTITEESNSQRFSESMKTFLKRAEEEIIRVQAQESVALSLVKEITEYFHGNSAKEEAHPFRIFLVVRDFLGVVDRVCKEVGMINERTMVSSAHKFPVPVNPMMPQPLPGLVGRRQSSSSSSSSSTSSSDEDEHNSISLVS</sequence>
<organism>
    <name type="scientific">Arabidopsis thaliana</name>
    <name type="common">Mouse-ear cress</name>
    <dbReference type="NCBI Taxonomy" id="3702"/>
    <lineage>
        <taxon>Eukaryota</taxon>
        <taxon>Viridiplantae</taxon>
        <taxon>Streptophyta</taxon>
        <taxon>Embryophyta</taxon>
        <taxon>Tracheophyta</taxon>
        <taxon>Spermatophyta</taxon>
        <taxon>Magnoliopsida</taxon>
        <taxon>eudicotyledons</taxon>
        <taxon>Gunneridae</taxon>
        <taxon>Pentapetalae</taxon>
        <taxon>rosids</taxon>
        <taxon>malvids</taxon>
        <taxon>Brassicales</taxon>
        <taxon>Brassicaceae</taxon>
        <taxon>Camelineae</taxon>
        <taxon>Arabidopsis</taxon>
    </lineage>
</organism>
<proteinExistence type="evidence at protein level"/>
<reference key="1">
    <citation type="journal article" date="2000" name="Plant Cell Physiol.">
        <title>Characterization of the Arabidopsis formin-like protein AFH1 and its interacting protein.</title>
        <authorList>
            <person name="Banno H."/>
            <person name="Chua N.-H."/>
        </authorList>
    </citation>
    <scope>NUCLEOTIDE SEQUENCE [MRNA]</scope>
    <scope>INTERACTION WITH FIP2</scope>
    <source>
        <strain>cv. Landsberg erecta</strain>
    </source>
</reference>
<reference key="2">
    <citation type="journal article" date="2000" name="DNA Res.">
        <title>Structural analysis of Arabidopsis thaliana chromosome 3. I. Sequence features of the regions of 4,504,864 bp covered by sixty P1 and TAC clones.</title>
        <authorList>
            <person name="Sato S."/>
            <person name="Nakamura Y."/>
            <person name="Kaneko T."/>
            <person name="Katoh T."/>
            <person name="Asamizu E."/>
            <person name="Tabata S."/>
        </authorList>
    </citation>
    <scope>NUCLEOTIDE SEQUENCE [LARGE SCALE GENOMIC DNA]</scope>
    <source>
        <strain>cv. Columbia</strain>
    </source>
</reference>
<reference key="3">
    <citation type="journal article" date="2017" name="Plant J.">
        <title>Araport11: a complete reannotation of the Arabidopsis thaliana reference genome.</title>
        <authorList>
            <person name="Cheng C.Y."/>
            <person name="Krishnakumar V."/>
            <person name="Chan A.P."/>
            <person name="Thibaud-Nissen F."/>
            <person name="Schobel S."/>
            <person name="Town C.D."/>
        </authorList>
    </citation>
    <scope>GENOME REANNOTATION</scope>
    <source>
        <strain>cv. Columbia</strain>
    </source>
</reference>
<reference key="4">
    <citation type="journal article" date="2003" name="Science">
        <title>Empirical analysis of transcriptional activity in the Arabidopsis genome.</title>
        <authorList>
            <person name="Yamada K."/>
            <person name="Lim J."/>
            <person name="Dale J.M."/>
            <person name="Chen H."/>
            <person name="Shinn P."/>
            <person name="Palm C.J."/>
            <person name="Southwick A.M."/>
            <person name="Wu H.C."/>
            <person name="Kim C.J."/>
            <person name="Nguyen M."/>
            <person name="Pham P.K."/>
            <person name="Cheuk R.F."/>
            <person name="Karlin-Newmann G."/>
            <person name="Liu S.X."/>
            <person name="Lam B."/>
            <person name="Sakano H."/>
            <person name="Wu T."/>
            <person name="Yu G."/>
            <person name="Miranda M."/>
            <person name="Quach H.L."/>
            <person name="Tripp M."/>
            <person name="Chang C.H."/>
            <person name="Lee J.M."/>
            <person name="Toriumi M.J."/>
            <person name="Chan M.M."/>
            <person name="Tang C.C."/>
            <person name="Onodera C.S."/>
            <person name="Deng J.M."/>
            <person name="Akiyama K."/>
            <person name="Ansari Y."/>
            <person name="Arakawa T."/>
            <person name="Banh J."/>
            <person name="Banno F."/>
            <person name="Bowser L."/>
            <person name="Brooks S.Y."/>
            <person name="Carninci P."/>
            <person name="Chao Q."/>
            <person name="Choy N."/>
            <person name="Enju A."/>
            <person name="Goldsmith A.D."/>
            <person name="Gurjal M."/>
            <person name="Hansen N.F."/>
            <person name="Hayashizaki Y."/>
            <person name="Johnson-Hopson C."/>
            <person name="Hsuan V.W."/>
            <person name="Iida K."/>
            <person name="Karnes M."/>
            <person name="Khan S."/>
            <person name="Koesema E."/>
            <person name="Ishida J."/>
            <person name="Jiang P.X."/>
            <person name="Jones T."/>
            <person name="Kawai J."/>
            <person name="Kamiya A."/>
            <person name="Meyers C."/>
            <person name="Nakajima M."/>
            <person name="Narusaka M."/>
            <person name="Seki M."/>
            <person name="Sakurai T."/>
            <person name="Satou M."/>
            <person name="Tamse R."/>
            <person name="Vaysberg M."/>
            <person name="Wallender E.K."/>
            <person name="Wong C."/>
            <person name="Yamamura Y."/>
            <person name="Yuan S."/>
            <person name="Shinozaki K."/>
            <person name="Davis R.W."/>
            <person name="Theologis A."/>
            <person name="Ecker J.R."/>
        </authorList>
    </citation>
    <scope>NUCLEOTIDE SEQUENCE [LARGE SCALE MRNA]</scope>
    <source>
        <strain>cv. Columbia</strain>
    </source>
</reference>
<reference key="5">
    <citation type="submission" date="2006-07" db="EMBL/GenBank/DDBJ databases">
        <title>Large-scale analysis of RIKEN Arabidopsis full-length (RAFL) cDNAs.</title>
        <authorList>
            <person name="Totoki Y."/>
            <person name="Seki M."/>
            <person name="Ishida J."/>
            <person name="Nakajima M."/>
            <person name="Enju A."/>
            <person name="Kamiya A."/>
            <person name="Narusaka M."/>
            <person name="Shin-i T."/>
            <person name="Nakagawa M."/>
            <person name="Sakamoto N."/>
            <person name="Oishi K."/>
            <person name="Kohara Y."/>
            <person name="Kobayashi M."/>
            <person name="Toyoda A."/>
            <person name="Sakaki Y."/>
            <person name="Sakurai T."/>
            <person name="Iida K."/>
            <person name="Akiyama K."/>
            <person name="Satou M."/>
            <person name="Toyoda T."/>
            <person name="Konagaya A."/>
            <person name="Carninci P."/>
            <person name="Kawai J."/>
            <person name="Hayashizaki Y."/>
            <person name="Shinozaki K."/>
        </authorList>
    </citation>
    <scope>NUCLEOTIDE SEQUENCE [LARGE SCALE MRNA] OF 5-1051</scope>
    <source>
        <strain>cv. Columbia</strain>
    </source>
</reference>
<reference key="6">
    <citation type="journal article" date="2000" name="Genome Biol.">
        <title>Are plant formins integral membrane proteins?</title>
        <authorList>
            <person name="Cvrckova F."/>
        </authorList>
    </citation>
    <scope>GENE FAMILY ORGANIZATION</scope>
</reference>
<reference key="7">
    <citation type="journal article" date="2002" name="Trends Plant Sci.">
        <title>Formins: intermediates in signal-transduction cascades that affect cytoskeletal reorganization.</title>
        <authorList>
            <person name="Deeks M.J."/>
            <person name="Hussey P.J."/>
            <person name="Davies B."/>
        </authorList>
    </citation>
    <scope>GENE FAMILY ORGANIZATION</scope>
    <scope>NOMENCLATURE</scope>
</reference>
<reference key="8">
    <citation type="journal article" date="2004" name="BMC Genomics">
        <title>Formin homology 2 domains occur in multiple contexts in angiosperms.</title>
        <authorList>
            <person name="Cvrckova F."/>
            <person name="Novotny M."/>
            <person name="Pickova D."/>
            <person name="Zarsky V."/>
        </authorList>
    </citation>
    <scope>GENE FAMILY ORGANIZATION</scope>
    <scope>NOMENCLATURE</scope>
</reference>
<reference key="9">
    <citation type="journal article" date="2004" name="Plant Cell">
        <title>Overexpression of an Arabidopsis formin stimulates supernumerary actin cable formation from pollen tube cell membrane.</title>
        <authorList>
            <person name="Cheung A.Y."/>
            <person name="Wu H.-M."/>
        </authorList>
    </citation>
    <scope>FUNCTION</scope>
</reference>
<reference key="10">
    <citation type="journal article" date="2004" name="Plant Cell">
        <title>Arabidopsis formin AtFH6 is a plasma membrane-associated protein upregulated in giant cells induced by parasitic nematodes.</title>
        <authorList>
            <person name="Favery B."/>
            <person name="Chelysheva L.A."/>
            <person name="Lebris M."/>
            <person name="Jammes F."/>
            <person name="Marmagne A."/>
            <person name="De Almeida-Engler J."/>
            <person name="Lecomte P."/>
            <person name="Vaury C."/>
            <person name="Arkowitz R.A."/>
            <person name="Abad P."/>
        </authorList>
    </citation>
    <scope>INDUCTION</scope>
</reference>
<reference key="11">
    <citation type="journal article" date="2005" name="Plant Cell">
        <title>The formin homology 1 domain modulates the actin nucleation and bundling activity of Arabidopsis FORMIN1.</title>
        <authorList>
            <person name="Michelot A."/>
            <person name="Guerin C."/>
            <person name="Huang S."/>
            <person name="Ingouff M."/>
            <person name="Richard S."/>
            <person name="Rodiuc N."/>
            <person name="Staiger C.J."/>
            <person name="Blanchoin L."/>
        </authorList>
    </citation>
    <scope>FUNCTION</scope>
</reference>